<gene>
    <name evidence="1" type="primary">selA</name>
    <name type="ordered locus">SSPA3300</name>
</gene>
<evidence type="ECO:0000255" key="1">
    <source>
        <dbReference type="HAMAP-Rule" id="MF_00423"/>
    </source>
</evidence>
<reference key="1">
    <citation type="journal article" date="2009" name="BMC Genomics">
        <title>Pseudogene accumulation in the evolutionary histories of Salmonella enterica serovars Paratyphi A and Typhi.</title>
        <authorList>
            <person name="Holt K.E."/>
            <person name="Thomson N.R."/>
            <person name="Wain J."/>
            <person name="Langridge G.C."/>
            <person name="Hasan R."/>
            <person name="Bhutta Z.A."/>
            <person name="Quail M.A."/>
            <person name="Norbertczak H."/>
            <person name="Walker D."/>
            <person name="Simmonds M."/>
            <person name="White B."/>
            <person name="Bason N."/>
            <person name="Mungall K."/>
            <person name="Dougan G."/>
            <person name="Parkhill J."/>
        </authorList>
    </citation>
    <scope>NUCLEOTIDE SEQUENCE [LARGE SCALE GENOMIC DNA]</scope>
    <source>
        <strain>AKU_12601</strain>
    </source>
</reference>
<protein>
    <recommendedName>
        <fullName evidence="1">L-seryl-tRNA(Sec) selenium transferase</fullName>
        <ecNumber evidence="1">2.9.1.1</ecNumber>
    </recommendedName>
    <alternativeName>
        <fullName evidence="1">Selenocysteine synthase</fullName>
        <shortName evidence="1">Sec synthase</shortName>
    </alternativeName>
    <alternativeName>
        <fullName evidence="1">Selenocysteinyl-tRNA(Sec) synthase</fullName>
    </alternativeName>
</protein>
<accession>B5BHW8</accession>
<organism>
    <name type="scientific">Salmonella paratyphi A (strain AKU_12601)</name>
    <dbReference type="NCBI Taxonomy" id="554290"/>
    <lineage>
        <taxon>Bacteria</taxon>
        <taxon>Pseudomonadati</taxon>
        <taxon>Pseudomonadota</taxon>
        <taxon>Gammaproteobacteria</taxon>
        <taxon>Enterobacterales</taxon>
        <taxon>Enterobacteriaceae</taxon>
        <taxon>Salmonella</taxon>
    </lineage>
</organism>
<comment type="function">
    <text evidence="1">Converts seryl-tRNA(Sec) to selenocysteinyl-tRNA(Sec) required for selenoprotein biosynthesis.</text>
</comment>
<comment type="catalytic activity">
    <reaction evidence="1">
        <text>L-seryl-tRNA(Sec) + selenophosphate + H(+) = L-selenocysteinyl-tRNA(Sec) + phosphate</text>
        <dbReference type="Rhea" id="RHEA:22728"/>
        <dbReference type="Rhea" id="RHEA-COMP:9742"/>
        <dbReference type="Rhea" id="RHEA-COMP:9743"/>
        <dbReference type="ChEBI" id="CHEBI:15378"/>
        <dbReference type="ChEBI" id="CHEBI:16144"/>
        <dbReference type="ChEBI" id="CHEBI:43474"/>
        <dbReference type="ChEBI" id="CHEBI:78533"/>
        <dbReference type="ChEBI" id="CHEBI:78573"/>
        <dbReference type="EC" id="2.9.1.1"/>
    </reaction>
</comment>
<comment type="cofactor">
    <cofactor evidence="1">
        <name>pyridoxal 5'-phosphate</name>
        <dbReference type="ChEBI" id="CHEBI:597326"/>
    </cofactor>
</comment>
<comment type="pathway">
    <text evidence="1">Aminoacyl-tRNA biosynthesis; selenocysteinyl-tRNA(Sec) biosynthesis; selenocysteinyl-tRNA(Sec) from L-seryl-tRNA(Sec) (bacterial route): step 1/1.</text>
</comment>
<comment type="subunit">
    <text evidence="1">Homodecamer; pentamer of dimers. Binds only one seryl-tRNA(Sec) per dimer.</text>
</comment>
<comment type="subcellular location">
    <subcellularLocation>
        <location evidence="1">Cytoplasm</location>
    </subcellularLocation>
</comment>
<comment type="similarity">
    <text evidence="1">Belongs to the SelA family.</text>
</comment>
<proteinExistence type="inferred from homology"/>
<keyword id="KW-0963">Cytoplasm</keyword>
<keyword id="KW-0648">Protein biosynthesis</keyword>
<keyword id="KW-0663">Pyridoxal phosphate</keyword>
<keyword id="KW-0711">Selenium</keyword>
<keyword id="KW-0808">Transferase</keyword>
<dbReference type="EC" id="2.9.1.1" evidence="1"/>
<dbReference type="EMBL" id="FM200053">
    <property type="protein sequence ID" value="CAR61564.1"/>
    <property type="molecule type" value="Genomic_DNA"/>
</dbReference>
<dbReference type="RefSeq" id="WP_000200191.1">
    <property type="nucleotide sequence ID" value="NC_011147.1"/>
</dbReference>
<dbReference type="SMR" id="B5BHW8"/>
<dbReference type="KEGG" id="sek:SSPA3300"/>
<dbReference type="HOGENOM" id="CLU_038142_1_0_6"/>
<dbReference type="UniPathway" id="UPA00906">
    <property type="reaction ID" value="UER00896"/>
</dbReference>
<dbReference type="Proteomes" id="UP000001869">
    <property type="component" value="Chromosome"/>
</dbReference>
<dbReference type="GO" id="GO:0005737">
    <property type="term" value="C:cytoplasm"/>
    <property type="evidence" value="ECO:0007669"/>
    <property type="project" value="UniProtKB-SubCell"/>
</dbReference>
<dbReference type="GO" id="GO:0004125">
    <property type="term" value="F:L-seryl-tRNA(Sec) selenium transferase activity"/>
    <property type="evidence" value="ECO:0007669"/>
    <property type="project" value="UniProtKB-UniRule"/>
</dbReference>
<dbReference type="GO" id="GO:0001717">
    <property type="term" value="P:conversion of seryl-tRNAsec to selenocys-tRNAsec"/>
    <property type="evidence" value="ECO:0007669"/>
    <property type="project" value="UniProtKB-UniRule"/>
</dbReference>
<dbReference type="GO" id="GO:0001514">
    <property type="term" value="P:selenocysteine incorporation"/>
    <property type="evidence" value="ECO:0007669"/>
    <property type="project" value="UniProtKB-UniRule"/>
</dbReference>
<dbReference type="FunFam" id="3.40.640.10:FF:000028">
    <property type="entry name" value="L-seryl-tRNA(Sec) selenium transferase"/>
    <property type="match status" value="1"/>
</dbReference>
<dbReference type="FunFam" id="3.90.1150.180:FF:000001">
    <property type="entry name" value="L-seryl-tRNA(Sec) selenium transferase"/>
    <property type="match status" value="1"/>
</dbReference>
<dbReference type="Gene3D" id="3.90.1150.180">
    <property type="match status" value="1"/>
</dbReference>
<dbReference type="Gene3D" id="3.40.640.10">
    <property type="entry name" value="Type I PLP-dependent aspartate aminotransferase-like (Major domain)"/>
    <property type="match status" value="1"/>
</dbReference>
<dbReference type="HAMAP" id="MF_00423">
    <property type="entry name" value="SelA"/>
    <property type="match status" value="1"/>
</dbReference>
<dbReference type="InterPro" id="IPR015424">
    <property type="entry name" value="PyrdxlP-dep_Trfase"/>
</dbReference>
<dbReference type="InterPro" id="IPR015421">
    <property type="entry name" value="PyrdxlP-dep_Trfase_major"/>
</dbReference>
<dbReference type="InterPro" id="IPR018319">
    <property type="entry name" value="SelA-like"/>
</dbReference>
<dbReference type="InterPro" id="IPR004534">
    <property type="entry name" value="SelA_trans"/>
</dbReference>
<dbReference type="InterPro" id="IPR025862">
    <property type="entry name" value="SelA_trans_N_dom"/>
</dbReference>
<dbReference type="NCBIfam" id="TIGR00474">
    <property type="entry name" value="selA"/>
    <property type="match status" value="1"/>
</dbReference>
<dbReference type="PANTHER" id="PTHR32328">
    <property type="entry name" value="L-SERYL-TRNA(SEC) SELENIUM TRANSFERASE"/>
    <property type="match status" value="1"/>
</dbReference>
<dbReference type="PANTHER" id="PTHR32328:SF0">
    <property type="entry name" value="L-SERYL-TRNA(SEC) SELENIUM TRANSFERASE"/>
    <property type="match status" value="1"/>
</dbReference>
<dbReference type="Pfam" id="PF12390">
    <property type="entry name" value="Se-cys_synth_N"/>
    <property type="match status" value="1"/>
</dbReference>
<dbReference type="Pfam" id="PF03841">
    <property type="entry name" value="SelA"/>
    <property type="match status" value="1"/>
</dbReference>
<dbReference type="SUPFAM" id="SSF53383">
    <property type="entry name" value="PLP-dependent transferases"/>
    <property type="match status" value="1"/>
</dbReference>
<name>SELA_SALPK</name>
<feature type="chain" id="PRO_1000124156" description="L-seryl-tRNA(Sec) selenium transferase">
    <location>
        <begin position="1"/>
        <end position="463"/>
    </location>
</feature>
<feature type="modified residue" description="N6-(pyridoxal phosphate)lysine" evidence="1">
    <location>
        <position position="295"/>
    </location>
</feature>
<sequence>MTSETRTLYSQLPAIDRLLHDSAFLSLRDRYGHTQVVDLLRRMLDDARDVIRNTQTLPDWYADWAQEAKLRLENAAQSALRPVINLTGTVLHTNLGRALQAQEAIEAVTQAMRAPVTLEYDLDGAGRGHRDRALATLLCRITGAEDACIVNNNAAAVLLMLAATASGKEVVVSRGELVEIGGAFRIPDVMRQAGCTLHEVGTTNRTHAKDYRQAVNENTGLLMKVHTSNYSIEGFTKTVEEAELVEIGRELDIPVVADLGSGSLVDLSQYGLPKEPMLQQLIAAGVSLVSFSGDKLLGGPQAGIIVGKKAMIAQLQSHPLKRALRADKMTLAALEATLRLYLHPEALAEKLPTLRLLTRSEASIREQAQRLQARLAARYGDEFALEVKPCLSQIGSGSLPVDRLPSAAMTFTPHDGRGSRLEALAARWRTLPVPVIGRIYDGRLWLDMRCLEDESRFMEMMLK</sequence>